<comment type="catalytic activity">
    <reaction evidence="1">
        <text>L-histidinol phosphate + 2-oxoglutarate = 3-(imidazol-4-yl)-2-oxopropyl phosphate + L-glutamate</text>
        <dbReference type="Rhea" id="RHEA:23744"/>
        <dbReference type="ChEBI" id="CHEBI:16810"/>
        <dbReference type="ChEBI" id="CHEBI:29985"/>
        <dbReference type="ChEBI" id="CHEBI:57766"/>
        <dbReference type="ChEBI" id="CHEBI:57980"/>
        <dbReference type="EC" id="2.6.1.9"/>
    </reaction>
</comment>
<comment type="cofactor">
    <cofactor evidence="1">
        <name>pyridoxal 5'-phosphate</name>
        <dbReference type="ChEBI" id="CHEBI:597326"/>
    </cofactor>
</comment>
<comment type="pathway">
    <text evidence="1">Amino-acid biosynthesis; L-histidine biosynthesis; L-histidine from 5-phospho-alpha-D-ribose 1-diphosphate: step 7/9.</text>
</comment>
<comment type="subunit">
    <text evidence="1">Homodimer.</text>
</comment>
<comment type="similarity">
    <text evidence="1">Belongs to the class-II pyridoxal-phosphate-dependent aminotransferase family. Histidinol-phosphate aminotransferase subfamily.</text>
</comment>
<dbReference type="EC" id="2.6.1.9" evidence="1"/>
<dbReference type="EMBL" id="CP000088">
    <property type="protein sequence ID" value="AAZ55189.1"/>
    <property type="molecule type" value="Genomic_DNA"/>
</dbReference>
<dbReference type="RefSeq" id="WP_011291598.1">
    <property type="nucleotide sequence ID" value="NC_007333.1"/>
</dbReference>
<dbReference type="SMR" id="Q47QS8"/>
<dbReference type="STRING" id="269800.Tfu_1151"/>
<dbReference type="KEGG" id="tfu:Tfu_1151"/>
<dbReference type="eggNOG" id="COG0079">
    <property type="taxonomic scope" value="Bacteria"/>
</dbReference>
<dbReference type="HOGENOM" id="CLU_017584_3_1_11"/>
<dbReference type="OrthoDB" id="9809616at2"/>
<dbReference type="UniPathway" id="UPA00031">
    <property type="reaction ID" value="UER00012"/>
</dbReference>
<dbReference type="GO" id="GO:0004400">
    <property type="term" value="F:histidinol-phosphate transaminase activity"/>
    <property type="evidence" value="ECO:0007669"/>
    <property type="project" value="UniProtKB-UniRule"/>
</dbReference>
<dbReference type="GO" id="GO:0030170">
    <property type="term" value="F:pyridoxal phosphate binding"/>
    <property type="evidence" value="ECO:0007669"/>
    <property type="project" value="InterPro"/>
</dbReference>
<dbReference type="GO" id="GO:0000105">
    <property type="term" value="P:L-histidine biosynthetic process"/>
    <property type="evidence" value="ECO:0007669"/>
    <property type="project" value="UniProtKB-UniRule"/>
</dbReference>
<dbReference type="CDD" id="cd00609">
    <property type="entry name" value="AAT_like"/>
    <property type="match status" value="1"/>
</dbReference>
<dbReference type="Gene3D" id="3.90.1150.10">
    <property type="entry name" value="Aspartate Aminotransferase, domain 1"/>
    <property type="match status" value="1"/>
</dbReference>
<dbReference type="Gene3D" id="3.40.640.10">
    <property type="entry name" value="Type I PLP-dependent aspartate aminotransferase-like (Major domain)"/>
    <property type="match status" value="1"/>
</dbReference>
<dbReference type="HAMAP" id="MF_01023">
    <property type="entry name" value="HisC_aminotrans_2"/>
    <property type="match status" value="1"/>
</dbReference>
<dbReference type="InterPro" id="IPR001917">
    <property type="entry name" value="Aminotrans_II_pyridoxalP_BS"/>
</dbReference>
<dbReference type="InterPro" id="IPR004839">
    <property type="entry name" value="Aminotransferase_I/II_large"/>
</dbReference>
<dbReference type="InterPro" id="IPR005861">
    <property type="entry name" value="HisP_aminotrans"/>
</dbReference>
<dbReference type="InterPro" id="IPR015424">
    <property type="entry name" value="PyrdxlP-dep_Trfase"/>
</dbReference>
<dbReference type="InterPro" id="IPR015421">
    <property type="entry name" value="PyrdxlP-dep_Trfase_major"/>
</dbReference>
<dbReference type="InterPro" id="IPR015422">
    <property type="entry name" value="PyrdxlP-dep_Trfase_small"/>
</dbReference>
<dbReference type="NCBIfam" id="TIGR01141">
    <property type="entry name" value="hisC"/>
    <property type="match status" value="1"/>
</dbReference>
<dbReference type="NCBIfam" id="NF002877">
    <property type="entry name" value="PRK03317.1"/>
    <property type="match status" value="1"/>
</dbReference>
<dbReference type="PANTHER" id="PTHR42885:SF2">
    <property type="entry name" value="HISTIDINOL-PHOSPHATE AMINOTRANSFERASE"/>
    <property type="match status" value="1"/>
</dbReference>
<dbReference type="PANTHER" id="PTHR42885">
    <property type="entry name" value="HISTIDINOL-PHOSPHATE AMINOTRANSFERASE-RELATED"/>
    <property type="match status" value="1"/>
</dbReference>
<dbReference type="Pfam" id="PF00155">
    <property type="entry name" value="Aminotran_1_2"/>
    <property type="match status" value="1"/>
</dbReference>
<dbReference type="SUPFAM" id="SSF53383">
    <property type="entry name" value="PLP-dependent transferases"/>
    <property type="match status" value="1"/>
</dbReference>
<dbReference type="PROSITE" id="PS00599">
    <property type="entry name" value="AA_TRANSFER_CLASS_2"/>
    <property type="match status" value="1"/>
</dbReference>
<keyword id="KW-0028">Amino-acid biosynthesis</keyword>
<keyword id="KW-0032">Aminotransferase</keyword>
<keyword id="KW-0368">Histidine biosynthesis</keyword>
<keyword id="KW-0663">Pyridoxal phosphate</keyword>
<keyword id="KW-0808">Transferase</keyword>
<gene>
    <name evidence="1" type="primary">hisC</name>
    <name type="ordered locus">Tfu_1151</name>
</gene>
<organism>
    <name type="scientific">Thermobifida fusca (strain YX)</name>
    <dbReference type="NCBI Taxonomy" id="269800"/>
    <lineage>
        <taxon>Bacteria</taxon>
        <taxon>Bacillati</taxon>
        <taxon>Actinomycetota</taxon>
        <taxon>Actinomycetes</taxon>
        <taxon>Streptosporangiales</taxon>
        <taxon>Nocardiopsidaceae</taxon>
        <taxon>Thermobifida</taxon>
    </lineage>
</organism>
<protein>
    <recommendedName>
        <fullName evidence="1">Histidinol-phosphate aminotransferase</fullName>
        <ecNumber evidence="1">2.6.1.9</ecNumber>
    </recommendedName>
    <alternativeName>
        <fullName evidence="1">Imidazole acetol-phosphate transaminase</fullName>
    </alternativeName>
</protein>
<feature type="chain" id="PRO_0000153469" description="Histidinol-phosphate aminotransferase">
    <location>
        <begin position="1"/>
        <end position="367"/>
    </location>
</feature>
<feature type="modified residue" description="N6-(pyridoxal phosphate)lysine" evidence="1">
    <location>
        <position position="230"/>
    </location>
</feature>
<evidence type="ECO:0000255" key="1">
    <source>
        <dbReference type="HAMAP-Rule" id="MF_01023"/>
    </source>
</evidence>
<reference key="1">
    <citation type="journal article" date="2007" name="J. Bacteriol.">
        <title>Genome sequence and analysis of the soil cellulolytic actinomycete Thermobifida fusca YX.</title>
        <authorList>
            <person name="Lykidis A."/>
            <person name="Mavromatis K."/>
            <person name="Ivanova N."/>
            <person name="Anderson I."/>
            <person name="Land M."/>
            <person name="DiBartolo G."/>
            <person name="Martinez M."/>
            <person name="Lapidus A."/>
            <person name="Lucas S."/>
            <person name="Copeland A."/>
            <person name="Richardson P."/>
            <person name="Wilson D.B."/>
            <person name="Kyrpides N."/>
        </authorList>
    </citation>
    <scope>NUCLEOTIDE SEQUENCE [LARGE SCALE GENOMIC DNA]</scope>
    <source>
        <strain>YX</strain>
    </source>
</reference>
<proteinExistence type="inferred from homology"/>
<sequence>MSDFGHTGFSIDDLPLRDDLRGQAPYGAPQLTVKAVLNTNENPYPPSPELVEAIGRAAAEAAVGLNRYPDREATALRQALADYLGHGVDAANVWAANGSNEILQQILQAFGGPGHKALGFEPSYSMHPIIARGTATEWVSVPRTADFDVDADAAVAAVKEHEPSVVFLTSPNNPTGTALPLATVEAIAAAAPGVVVVDEAYAEFRREGTPSALSLLRTYPNVIVSRTMSKAFAMAGVRLGYLAAHPAVVDALQLVRLPYHLSTVTQAVALTALRYADELLSAVATLRAERDALVDWLRAHGFEVADSDANFVLFGRFPDRSAVFQHLLDQGVLIREVGPPEWLRVTVGTPEEMAIFREALLTATGRA</sequence>
<name>HIS8_THEFY</name>
<accession>Q47QS8</accession>